<accession>A3D9T2</accession>
<protein>
    <recommendedName>
        <fullName evidence="1">Dihydroxy-acid dehydratase</fullName>
        <shortName evidence="1">DAD</shortName>
        <ecNumber evidence="1">4.2.1.9</ecNumber>
    </recommendedName>
</protein>
<keyword id="KW-0001">2Fe-2S</keyword>
<keyword id="KW-0028">Amino-acid biosynthesis</keyword>
<keyword id="KW-0100">Branched-chain amino acid biosynthesis</keyword>
<keyword id="KW-0408">Iron</keyword>
<keyword id="KW-0411">Iron-sulfur</keyword>
<keyword id="KW-0456">Lyase</keyword>
<keyword id="KW-0460">Magnesium</keyword>
<keyword id="KW-0479">Metal-binding</keyword>
<keyword id="KW-1185">Reference proteome</keyword>
<gene>
    <name evidence="1" type="primary">ilvD</name>
    <name type="ordered locus">Sbal_4029</name>
</gene>
<comment type="function">
    <text evidence="1">Functions in the biosynthesis of branched-chain amino acids. Catalyzes the dehydration of (2R,3R)-2,3-dihydroxy-3-methylpentanoate (2,3-dihydroxy-3-methylvalerate) into 2-oxo-3-methylpentanoate (2-oxo-3-methylvalerate) and of (2R)-2,3-dihydroxy-3-methylbutanoate (2,3-dihydroxyisovalerate) into 2-oxo-3-methylbutanoate (2-oxoisovalerate), the penultimate precursor to L-isoleucine and L-valine, respectively.</text>
</comment>
<comment type="catalytic activity">
    <reaction evidence="1">
        <text>(2R)-2,3-dihydroxy-3-methylbutanoate = 3-methyl-2-oxobutanoate + H2O</text>
        <dbReference type="Rhea" id="RHEA:24809"/>
        <dbReference type="ChEBI" id="CHEBI:11851"/>
        <dbReference type="ChEBI" id="CHEBI:15377"/>
        <dbReference type="ChEBI" id="CHEBI:49072"/>
        <dbReference type="EC" id="4.2.1.9"/>
    </reaction>
    <physiologicalReaction direction="left-to-right" evidence="1">
        <dbReference type="Rhea" id="RHEA:24810"/>
    </physiologicalReaction>
</comment>
<comment type="catalytic activity">
    <reaction evidence="1">
        <text>(2R,3R)-2,3-dihydroxy-3-methylpentanoate = (S)-3-methyl-2-oxopentanoate + H2O</text>
        <dbReference type="Rhea" id="RHEA:27694"/>
        <dbReference type="ChEBI" id="CHEBI:15377"/>
        <dbReference type="ChEBI" id="CHEBI:35146"/>
        <dbReference type="ChEBI" id="CHEBI:49258"/>
        <dbReference type="EC" id="4.2.1.9"/>
    </reaction>
    <physiologicalReaction direction="left-to-right" evidence="1">
        <dbReference type="Rhea" id="RHEA:27695"/>
    </physiologicalReaction>
</comment>
<comment type="cofactor">
    <cofactor evidence="1">
        <name>[2Fe-2S] cluster</name>
        <dbReference type="ChEBI" id="CHEBI:190135"/>
    </cofactor>
    <text evidence="1">Binds 1 [2Fe-2S] cluster per subunit. This cluster acts as a Lewis acid cofactor.</text>
</comment>
<comment type="cofactor">
    <cofactor evidence="1">
        <name>Mg(2+)</name>
        <dbReference type="ChEBI" id="CHEBI:18420"/>
    </cofactor>
</comment>
<comment type="pathway">
    <text evidence="1">Amino-acid biosynthesis; L-isoleucine biosynthesis; L-isoleucine from 2-oxobutanoate: step 3/4.</text>
</comment>
<comment type="pathway">
    <text evidence="1">Amino-acid biosynthesis; L-valine biosynthesis; L-valine from pyruvate: step 3/4.</text>
</comment>
<comment type="subunit">
    <text evidence="1">Homodimer.</text>
</comment>
<comment type="similarity">
    <text evidence="1">Belongs to the IlvD/Edd family.</text>
</comment>
<reference key="1">
    <citation type="submission" date="2007-02" db="EMBL/GenBank/DDBJ databases">
        <title>Complete sequence of chromosome of Shewanella baltica OS155.</title>
        <authorList>
            <consortium name="US DOE Joint Genome Institute"/>
            <person name="Copeland A."/>
            <person name="Lucas S."/>
            <person name="Lapidus A."/>
            <person name="Barry K."/>
            <person name="Detter J.C."/>
            <person name="Glavina del Rio T."/>
            <person name="Hammon N."/>
            <person name="Israni S."/>
            <person name="Dalin E."/>
            <person name="Tice H."/>
            <person name="Pitluck S."/>
            <person name="Sims D.R."/>
            <person name="Brettin T."/>
            <person name="Bruce D."/>
            <person name="Han C."/>
            <person name="Tapia R."/>
            <person name="Brainard J."/>
            <person name="Schmutz J."/>
            <person name="Larimer F."/>
            <person name="Land M."/>
            <person name="Hauser L."/>
            <person name="Kyrpides N."/>
            <person name="Mikhailova N."/>
            <person name="Brettar I."/>
            <person name="Klappenbach J."/>
            <person name="Konstantinidis K."/>
            <person name="Rodrigues J."/>
            <person name="Tiedje J."/>
            <person name="Richardson P."/>
        </authorList>
    </citation>
    <scope>NUCLEOTIDE SEQUENCE [LARGE SCALE GENOMIC DNA]</scope>
    <source>
        <strain>OS155 / ATCC BAA-1091</strain>
    </source>
</reference>
<organism>
    <name type="scientific">Shewanella baltica (strain OS155 / ATCC BAA-1091)</name>
    <dbReference type="NCBI Taxonomy" id="325240"/>
    <lineage>
        <taxon>Bacteria</taxon>
        <taxon>Pseudomonadati</taxon>
        <taxon>Pseudomonadota</taxon>
        <taxon>Gammaproteobacteria</taxon>
        <taxon>Alteromonadales</taxon>
        <taxon>Shewanellaceae</taxon>
        <taxon>Shewanella</taxon>
    </lineage>
</organism>
<proteinExistence type="inferred from homology"/>
<dbReference type="EC" id="4.2.1.9" evidence="1"/>
<dbReference type="EMBL" id="CP000563">
    <property type="protein sequence ID" value="ABN63495.1"/>
    <property type="molecule type" value="Genomic_DNA"/>
</dbReference>
<dbReference type="RefSeq" id="WP_011848074.1">
    <property type="nucleotide sequence ID" value="NC_009052.1"/>
</dbReference>
<dbReference type="SMR" id="A3D9T2"/>
<dbReference type="STRING" id="325240.Sbal_4029"/>
<dbReference type="KEGG" id="sbl:Sbal_4029"/>
<dbReference type="HOGENOM" id="CLU_014271_4_2_6"/>
<dbReference type="OrthoDB" id="9807077at2"/>
<dbReference type="UniPathway" id="UPA00047">
    <property type="reaction ID" value="UER00057"/>
</dbReference>
<dbReference type="UniPathway" id="UPA00049">
    <property type="reaction ID" value="UER00061"/>
</dbReference>
<dbReference type="Proteomes" id="UP000001557">
    <property type="component" value="Chromosome"/>
</dbReference>
<dbReference type="GO" id="GO:0005829">
    <property type="term" value="C:cytosol"/>
    <property type="evidence" value="ECO:0007669"/>
    <property type="project" value="TreeGrafter"/>
</dbReference>
<dbReference type="GO" id="GO:0051537">
    <property type="term" value="F:2 iron, 2 sulfur cluster binding"/>
    <property type="evidence" value="ECO:0007669"/>
    <property type="project" value="UniProtKB-UniRule"/>
</dbReference>
<dbReference type="GO" id="GO:0004160">
    <property type="term" value="F:dihydroxy-acid dehydratase activity"/>
    <property type="evidence" value="ECO:0007669"/>
    <property type="project" value="UniProtKB-UniRule"/>
</dbReference>
<dbReference type="GO" id="GO:0000287">
    <property type="term" value="F:magnesium ion binding"/>
    <property type="evidence" value="ECO:0007669"/>
    <property type="project" value="UniProtKB-UniRule"/>
</dbReference>
<dbReference type="GO" id="GO:0009097">
    <property type="term" value="P:isoleucine biosynthetic process"/>
    <property type="evidence" value="ECO:0007669"/>
    <property type="project" value="UniProtKB-UniRule"/>
</dbReference>
<dbReference type="GO" id="GO:0009099">
    <property type="term" value="P:L-valine biosynthetic process"/>
    <property type="evidence" value="ECO:0007669"/>
    <property type="project" value="UniProtKB-UniRule"/>
</dbReference>
<dbReference type="FunFam" id="3.50.30.80:FF:000001">
    <property type="entry name" value="Dihydroxy-acid dehydratase"/>
    <property type="match status" value="1"/>
</dbReference>
<dbReference type="Gene3D" id="3.50.30.80">
    <property type="entry name" value="IlvD/EDD C-terminal domain-like"/>
    <property type="match status" value="1"/>
</dbReference>
<dbReference type="HAMAP" id="MF_00012">
    <property type="entry name" value="IlvD"/>
    <property type="match status" value="1"/>
</dbReference>
<dbReference type="InterPro" id="IPR042096">
    <property type="entry name" value="Dihydro-acid_dehy_C"/>
</dbReference>
<dbReference type="InterPro" id="IPR004404">
    <property type="entry name" value="DihydroxyA_deHydtase"/>
</dbReference>
<dbReference type="InterPro" id="IPR020558">
    <property type="entry name" value="DiOHA_6PGluconate_deHydtase_CS"/>
</dbReference>
<dbReference type="InterPro" id="IPR056740">
    <property type="entry name" value="ILV_EDD_C"/>
</dbReference>
<dbReference type="InterPro" id="IPR000581">
    <property type="entry name" value="ILV_EDD_N"/>
</dbReference>
<dbReference type="InterPro" id="IPR037237">
    <property type="entry name" value="IlvD/EDD_N"/>
</dbReference>
<dbReference type="NCBIfam" id="TIGR00110">
    <property type="entry name" value="ilvD"/>
    <property type="match status" value="1"/>
</dbReference>
<dbReference type="NCBIfam" id="NF009103">
    <property type="entry name" value="PRK12448.1"/>
    <property type="match status" value="1"/>
</dbReference>
<dbReference type="PANTHER" id="PTHR43661">
    <property type="entry name" value="D-XYLONATE DEHYDRATASE"/>
    <property type="match status" value="1"/>
</dbReference>
<dbReference type="PANTHER" id="PTHR43661:SF3">
    <property type="entry name" value="D-XYLONATE DEHYDRATASE YAGF-RELATED"/>
    <property type="match status" value="1"/>
</dbReference>
<dbReference type="Pfam" id="PF24877">
    <property type="entry name" value="ILV_EDD_C"/>
    <property type="match status" value="1"/>
</dbReference>
<dbReference type="Pfam" id="PF00920">
    <property type="entry name" value="ILVD_EDD_N"/>
    <property type="match status" value="1"/>
</dbReference>
<dbReference type="SUPFAM" id="SSF143975">
    <property type="entry name" value="IlvD/EDD N-terminal domain-like"/>
    <property type="match status" value="1"/>
</dbReference>
<dbReference type="SUPFAM" id="SSF52016">
    <property type="entry name" value="LeuD/IlvD-like"/>
    <property type="match status" value="1"/>
</dbReference>
<dbReference type="PROSITE" id="PS00886">
    <property type="entry name" value="ILVD_EDD_1"/>
    <property type="match status" value="1"/>
</dbReference>
<dbReference type="PROSITE" id="PS00887">
    <property type="entry name" value="ILVD_EDD_2"/>
    <property type="match status" value="1"/>
</dbReference>
<name>ILVD_SHEB5</name>
<sequence>MPKLRSATSTEGRNMAGARALWRATGVKDNDFGKPIIAIANSFTQFVPGHVHLKDMGSLVASAIEEAGGIAKEFNTIAVDDGIAMGHGGMLYSLPSRELIADSVEYMVNAHCADALVCISNCDKITPGMLMAALRLNIPVVFVSGGPMEAGKTKLSDKLIKLDLVDAMVAGADSNVSDEDSAKIERSACPTCGSCSGMFTANSMNCLTEALGLSLPGNGSMLATHADRRELFLEAGRRVMALAKRYYHQDDESALPRNIANFKAFENAMTLDIAMGGSSNTVLHLLAAAQEADVDFTMADIDRMSRLVPHLCKVAPSTPKYHMEDVHRAGGVMGILGELDRTGLLHTDVFHVAADNDGTPGSGTLKSVLAQYDVMQTQDEKVKHFFMAGPAGIPTTKAFSQDCRWPSLDNDRQEGCIRSREFAFSQEGGLAVLSGNVAENGCIVKTAGVDESNLTFVGSARVYESQDDAVAGILGGEVVAGDVVVIRYEGPKGGPGMQEMLYPTSYLKSRGLGKACALITDGRFSGGTSGLSIGHVSPEAAAGGTIALIENGDRIEIDIPKRSIKLAVSDVELNARREKMHSLGPMAWKPIGRQRYVSLALKAYAMLATSADKGAVRDRSKLED</sequence>
<feature type="chain" id="PRO_1000001050" description="Dihydroxy-acid dehydratase">
    <location>
        <begin position="1"/>
        <end position="624"/>
    </location>
</feature>
<feature type="active site" description="Proton acceptor" evidence="1">
    <location>
        <position position="525"/>
    </location>
</feature>
<feature type="binding site" evidence="1">
    <location>
        <position position="81"/>
    </location>
    <ligand>
        <name>Mg(2+)</name>
        <dbReference type="ChEBI" id="CHEBI:18420"/>
    </ligand>
</feature>
<feature type="binding site" evidence="1">
    <location>
        <position position="122"/>
    </location>
    <ligand>
        <name>[2Fe-2S] cluster</name>
        <dbReference type="ChEBI" id="CHEBI:190135"/>
    </ligand>
</feature>
<feature type="binding site" evidence="1">
    <location>
        <position position="123"/>
    </location>
    <ligand>
        <name>Mg(2+)</name>
        <dbReference type="ChEBI" id="CHEBI:18420"/>
    </ligand>
</feature>
<feature type="binding site" description="via carbamate group" evidence="1">
    <location>
        <position position="124"/>
    </location>
    <ligand>
        <name>Mg(2+)</name>
        <dbReference type="ChEBI" id="CHEBI:18420"/>
    </ligand>
</feature>
<feature type="binding site" evidence="1">
    <location>
        <position position="195"/>
    </location>
    <ligand>
        <name>[2Fe-2S] cluster</name>
        <dbReference type="ChEBI" id="CHEBI:190135"/>
    </ligand>
</feature>
<feature type="binding site" evidence="1">
    <location>
        <position position="499"/>
    </location>
    <ligand>
        <name>Mg(2+)</name>
        <dbReference type="ChEBI" id="CHEBI:18420"/>
    </ligand>
</feature>
<feature type="modified residue" description="N6-carboxylysine" evidence="1">
    <location>
        <position position="124"/>
    </location>
</feature>
<evidence type="ECO:0000255" key="1">
    <source>
        <dbReference type="HAMAP-Rule" id="MF_00012"/>
    </source>
</evidence>